<dbReference type="EC" id="3.6.-.-" evidence="1"/>
<dbReference type="EMBL" id="CP000308">
    <property type="protein sequence ID" value="ABG16109.1"/>
    <property type="molecule type" value="Genomic_DNA"/>
</dbReference>
<dbReference type="RefSeq" id="WP_002220740.1">
    <property type="nucleotide sequence ID" value="NZ_CP009906.1"/>
</dbReference>
<dbReference type="SMR" id="Q1C0B3"/>
<dbReference type="GeneID" id="57974621"/>
<dbReference type="KEGG" id="ypa:YPA_4148"/>
<dbReference type="Proteomes" id="UP000001971">
    <property type="component" value="Chromosome"/>
</dbReference>
<dbReference type="GO" id="GO:0005829">
    <property type="term" value="C:cytosol"/>
    <property type="evidence" value="ECO:0007669"/>
    <property type="project" value="TreeGrafter"/>
</dbReference>
<dbReference type="GO" id="GO:0005525">
    <property type="term" value="F:GTP binding"/>
    <property type="evidence" value="ECO:0007669"/>
    <property type="project" value="UniProtKB-UniRule"/>
</dbReference>
<dbReference type="GO" id="GO:0003924">
    <property type="term" value="F:GTPase activity"/>
    <property type="evidence" value="ECO:0007669"/>
    <property type="project" value="UniProtKB-UniRule"/>
</dbReference>
<dbReference type="GO" id="GO:0046872">
    <property type="term" value="F:metal ion binding"/>
    <property type="evidence" value="ECO:0007669"/>
    <property type="project" value="UniProtKB-KW"/>
</dbReference>
<dbReference type="GO" id="GO:0030488">
    <property type="term" value="P:tRNA methylation"/>
    <property type="evidence" value="ECO:0007669"/>
    <property type="project" value="TreeGrafter"/>
</dbReference>
<dbReference type="GO" id="GO:0002098">
    <property type="term" value="P:tRNA wobble uridine modification"/>
    <property type="evidence" value="ECO:0007669"/>
    <property type="project" value="TreeGrafter"/>
</dbReference>
<dbReference type="CDD" id="cd04164">
    <property type="entry name" value="trmE"/>
    <property type="match status" value="1"/>
</dbReference>
<dbReference type="CDD" id="cd14858">
    <property type="entry name" value="TrmE_N"/>
    <property type="match status" value="1"/>
</dbReference>
<dbReference type="FunFam" id="3.30.1360.120:FF:000001">
    <property type="entry name" value="tRNA modification GTPase MnmE"/>
    <property type="match status" value="1"/>
</dbReference>
<dbReference type="FunFam" id="3.40.50.300:FF:000249">
    <property type="entry name" value="tRNA modification GTPase MnmE"/>
    <property type="match status" value="1"/>
</dbReference>
<dbReference type="Gene3D" id="3.40.50.300">
    <property type="entry name" value="P-loop containing nucleotide triphosphate hydrolases"/>
    <property type="match status" value="1"/>
</dbReference>
<dbReference type="Gene3D" id="3.30.1360.120">
    <property type="entry name" value="Probable tRNA modification gtpase trme, domain 1"/>
    <property type="match status" value="1"/>
</dbReference>
<dbReference type="Gene3D" id="1.20.120.430">
    <property type="entry name" value="tRNA modification GTPase MnmE domain 2"/>
    <property type="match status" value="1"/>
</dbReference>
<dbReference type="HAMAP" id="MF_00379">
    <property type="entry name" value="GTPase_MnmE"/>
    <property type="match status" value="1"/>
</dbReference>
<dbReference type="InterPro" id="IPR031168">
    <property type="entry name" value="G_TrmE"/>
</dbReference>
<dbReference type="InterPro" id="IPR006073">
    <property type="entry name" value="GTP-bd"/>
</dbReference>
<dbReference type="InterPro" id="IPR018948">
    <property type="entry name" value="GTP-bd_TrmE_N"/>
</dbReference>
<dbReference type="InterPro" id="IPR004520">
    <property type="entry name" value="GTPase_MnmE"/>
</dbReference>
<dbReference type="InterPro" id="IPR027368">
    <property type="entry name" value="MnmE_dom2"/>
</dbReference>
<dbReference type="InterPro" id="IPR025867">
    <property type="entry name" value="MnmE_helical"/>
</dbReference>
<dbReference type="InterPro" id="IPR027417">
    <property type="entry name" value="P-loop_NTPase"/>
</dbReference>
<dbReference type="InterPro" id="IPR005225">
    <property type="entry name" value="Small_GTP-bd"/>
</dbReference>
<dbReference type="InterPro" id="IPR027266">
    <property type="entry name" value="TrmE/GcvT_dom1"/>
</dbReference>
<dbReference type="NCBIfam" id="TIGR00450">
    <property type="entry name" value="mnmE_trmE_thdF"/>
    <property type="match status" value="1"/>
</dbReference>
<dbReference type="NCBIfam" id="NF003661">
    <property type="entry name" value="PRK05291.1-3"/>
    <property type="match status" value="1"/>
</dbReference>
<dbReference type="NCBIfam" id="TIGR00231">
    <property type="entry name" value="small_GTP"/>
    <property type="match status" value="1"/>
</dbReference>
<dbReference type="PANTHER" id="PTHR42714">
    <property type="entry name" value="TRNA MODIFICATION GTPASE GTPBP3"/>
    <property type="match status" value="1"/>
</dbReference>
<dbReference type="PANTHER" id="PTHR42714:SF2">
    <property type="entry name" value="TRNA MODIFICATION GTPASE GTPBP3, MITOCHONDRIAL"/>
    <property type="match status" value="1"/>
</dbReference>
<dbReference type="Pfam" id="PF01926">
    <property type="entry name" value="MMR_HSR1"/>
    <property type="match status" value="1"/>
</dbReference>
<dbReference type="Pfam" id="PF12631">
    <property type="entry name" value="MnmE_helical"/>
    <property type="match status" value="1"/>
</dbReference>
<dbReference type="Pfam" id="PF10396">
    <property type="entry name" value="TrmE_N"/>
    <property type="match status" value="1"/>
</dbReference>
<dbReference type="SUPFAM" id="SSF52540">
    <property type="entry name" value="P-loop containing nucleoside triphosphate hydrolases"/>
    <property type="match status" value="1"/>
</dbReference>
<dbReference type="SUPFAM" id="SSF116878">
    <property type="entry name" value="TrmE connector domain"/>
    <property type="match status" value="1"/>
</dbReference>
<dbReference type="PROSITE" id="PS51709">
    <property type="entry name" value="G_TRME"/>
    <property type="match status" value="1"/>
</dbReference>
<evidence type="ECO:0000255" key="1">
    <source>
        <dbReference type="HAMAP-Rule" id="MF_00379"/>
    </source>
</evidence>
<name>MNME_YERPA</name>
<feature type="chain" id="PRO_1000048909" description="tRNA modification GTPase MnmE">
    <location>
        <begin position="1"/>
        <end position="454"/>
    </location>
</feature>
<feature type="domain" description="TrmE-type G">
    <location>
        <begin position="216"/>
        <end position="377"/>
    </location>
</feature>
<feature type="binding site" evidence="1">
    <location>
        <position position="23"/>
    </location>
    <ligand>
        <name>(6S)-5-formyl-5,6,7,8-tetrahydrofolate</name>
        <dbReference type="ChEBI" id="CHEBI:57457"/>
    </ligand>
</feature>
<feature type="binding site" evidence="1">
    <location>
        <position position="80"/>
    </location>
    <ligand>
        <name>(6S)-5-formyl-5,6,7,8-tetrahydrofolate</name>
        <dbReference type="ChEBI" id="CHEBI:57457"/>
    </ligand>
</feature>
<feature type="binding site" evidence="1">
    <location>
        <position position="120"/>
    </location>
    <ligand>
        <name>(6S)-5-formyl-5,6,7,8-tetrahydrofolate</name>
        <dbReference type="ChEBI" id="CHEBI:57457"/>
    </ligand>
</feature>
<feature type="binding site" evidence="1">
    <location>
        <begin position="226"/>
        <end position="231"/>
    </location>
    <ligand>
        <name>GTP</name>
        <dbReference type="ChEBI" id="CHEBI:37565"/>
    </ligand>
</feature>
<feature type="binding site" evidence="1">
    <location>
        <position position="226"/>
    </location>
    <ligand>
        <name>K(+)</name>
        <dbReference type="ChEBI" id="CHEBI:29103"/>
    </ligand>
</feature>
<feature type="binding site" evidence="1">
    <location>
        <position position="230"/>
    </location>
    <ligand>
        <name>Mg(2+)</name>
        <dbReference type="ChEBI" id="CHEBI:18420"/>
    </ligand>
</feature>
<feature type="binding site" evidence="1">
    <location>
        <begin position="245"/>
        <end position="251"/>
    </location>
    <ligand>
        <name>GTP</name>
        <dbReference type="ChEBI" id="CHEBI:37565"/>
    </ligand>
</feature>
<feature type="binding site" evidence="1">
    <location>
        <position position="245"/>
    </location>
    <ligand>
        <name>K(+)</name>
        <dbReference type="ChEBI" id="CHEBI:29103"/>
    </ligand>
</feature>
<feature type="binding site" evidence="1">
    <location>
        <position position="247"/>
    </location>
    <ligand>
        <name>K(+)</name>
        <dbReference type="ChEBI" id="CHEBI:29103"/>
    </ligand>
</feature>
<feature type="binding site" evidence="1">
    <location>
        <position position="250"/>
    </location>
    <ligand>
        <name>K(+)</name>
        <dbReference type="ChEBI" id="CHEBI:29103"/>
    </ligand>
</feature>
<feature type="binding site" evidence="1">
    <location>
        <position position="251"/>
    </location>
    <ligand>
        <name>Mg(2+)</name>
        <dbReference type="ChEBI" id="CHEBI:18420"/>
    </ligand>
</feature>
<feature type="binding site" evidence="1">
    <location>
        <begin position="270"/>
        <end position="273"/>
    </location>
    <ligand>
        <name>GTP</name>
        <dbReference type="ChEBI" id="CHEBI:37565"/>
    </ligand>
</feature>
<feature type="binding site" evidence="1">
    <location>
        <begin position="335"/>
        <end position="338"/>
    </location>
    <ligand>
        <name>GTP</name>
        <dbReference type="ChEBI" id="CHEBI:37565"/>
    </ligand>
</feature>
<feature type="binding site" evidence="1">
    <location>
        <begin position="358"/>
        <end position="360"/>
    </location>
    <ligand>
        <name>GTP</name>
        <dbReference type="ChEBI" id="CHEBI:37565"/>
    </ligand>
</feature>
<feature type="binding site" evidence="1">
    <location>
        <position position="454"/>
    </location>
    <ligand>
        <name>(6S)-5-formyl-5,6,7,8-tetrahydrofolate</name>
        <dbReference type="ChEBI" id="CHEBI:57457"/>
    </ligand>
</feature>
<keyword id="KW-0963">Cytoplasm</keyword>
<keyword id="KW-0342">GTP-binding</keyword>
<keyword id="KW-0378">Hydrolase</keyword>
<keyword id="KW-0460">Magnesium</keyword>
<keyword id="KW-0479">Metal-binding</keyword>
<keyword id="KW-0547">Nucleotide-binding</keyword>
<keyword id="KW-0630">Potassium</keyword>
<keyword id="KW-0819">tRNA processing</keyword>
<comment type="function">
    <text evidence="1">Exhibits a very high intrinsic GTPase hydrolysis rate. Involved in the addition of a carboxymethylaminomethyl (cmnm) group at the wobble position (U34) of certain tRNAs, forming tRNA-cmnm(5)s(2)U34.</text>
</comment>
<comment type="cofactor">
    <cofactor evidence="1">
        <name>K(+)</name>
        <dbReference type="ChEBI" id="CHEBI:29103"/>
    </cofactor>
    <text evidence="1">Binds 1 potassium ion per subunit.</text>
</comment>
<comment type="subunit">
    <text evidence="1">Homodimer. Heterotetramer of two MnmE and two MnmG subunits.</text>
</comment>
<comment type="subcellular location">
    <subcellularLocation>
        <location evidence="1">Cytoplasm</location>
    </subcellularLocation>
</comment>
<comment type="similarity">
    <text evidence="1">Belongs to the TRAFAC class TrmE-Era-EngA-EngB-Septin-like GTPase superfamily. TrmE GTPase family.</text>
</comment>
<accession>Q1C0B3</accession>
<protein>
    <recommendedName>
        <fullName evidence="1">tRNA modification GTPase MnmE</fullName>
        <ecNumber evidence="1">3.6.-.-</ecNumber>
    </recommendedName>
</protein>
<organism>
    <name type="scientific">Yersinia pestis bv. Antiqua (strain Antiqua)</name>
    <dbReference type="NCBI Taxonomy" id="360102"/>
    <lineage>
        <taxon>Bacteria</taxon>
        <taxon>Pseudomonadati</taxon>
        <taxon>Pseudomonadota</taxon>
        <taxon>Gammaproteobacteria</taxon>
        <taxon>Enterobacterales</taxon>
        <taxon>Yersiniaceae</taxon>
        <taxon>Yersinia</taxon>
    </lineage>
</organism>
<gene>
    <name evidence="1" type="primary">mnmE</name>
    <name evidence="1" type="synonym">trmE</name>
    <name type="ordered locus">YPA_4148</name>
</gene>
<sequence length="454" mass="49037">MSTTDTIVAQATPPGRGGVGILRVSGRAASEVAHAVLGKLPKPRYADYLPFKDVDGSTLDQGIALYFPGPNSFTGEDVLELQGHGGPVILDLLLKRILALPGLRIARPGEFSERAFLNDKLDLAQAEAIADLIDASSEQAARSAVNSLQGAFSARIHQLVEALTHLRIYVEAAIDFPDEEIDFLSDGKIEGQLNGVMADLEQVRTEARQGSLLREGMKVVIAGRPNAGKSSLLNALAGREAAIVTDIAGTTRDVLREHIHIDGMPLHIIDTAGLREANDEVERIGIERAWNEIEQADRVLFMVDGTTTDATEPAAIWPEFMARLPATLPITVVRNKADITGETLGLTKVNGHSLIRLSARTGEGIDLLRDHLKQSMGFTSNTEGGFLARRRHLQALETAARHLIQGHEQLVSAYAGELLAEELRLAQQSLSEITGEFSSDDLLGRIFSSFCIGK</sequence>
<proteinExistence type="inferred from homology"/>
<reference key="1">
    <citation type="journal article" date="2006" name="J. Bacteriol.">
        <title>Complete genome sequence of Yersinia pestis strains Antiqua and Nepal516: evidence of gene reduction in an emerging pathogen.</title>
        <authorList>
            <person name="Chain P.S.G."/>
            <person name="Hu P."/>
            <person name="Malfatti S.A."/>
            <person name="Radnedge L."/>
            <person name="Larimer F."/>
            <person name="Vergez L.M."/>
            <person name="Worsham P."/>
            <person name="Chu M.C."/>
            <person name="Andersen G.L."/>
        </authorList>
    </citation>
    <scope>NUCLEOTIDE SEQUENCE [LARGE SCALE GENOMIC DNA]</scope>
    <source>
        <strain>Antiqua</strain>
    </source>
</reference>